<dbReference type="EMBL" id="CP000419">
    <property type="protein sequence ID" value="ABJ65616.1"/>
    <property type="molecule type" value="Genomic_DNA"/>
</dbReference>
<dbReference type="RefSeq" id="WP_011226851.1">
    <property type="nucleotide sequence ID" value="NC_008532.1"/>
</dbReference>
<dbReference type="SMR" id="Q03MF6"/>
<dbReference type="KEGG" id="ste:STER_0307"/>
<dbReference type="HOGENOM" id="CLU_038686_3_3_9"/>
<dbReference type="GO" id="GO:0005737">
    <property type="term" value="C:cytoplasm"/>
    <property type="evidence" value="ECO:0007669"/>
    <property type="project" value="UniProtKB-SubCell"/>
</dbReference>
<dbReference type="GO" id="GO:0051301">
    <property type="term" value="P:cell division"/>
    <property type="evidence" value="ECO:0007669"/>
    <property type="project" value="UniProtKB-KW"/>
</dbReference>
<dbReference type="GO" id="GO:0007059">
    <property type="term" value="P:chromosome segregation"/>
    <property type="evidence" value="ECO:0007669"/>
    <property type="project" value="UniProtKB-UniRule"/>
</dbReference>
<dbReference type="GO" id="GO:0006260">
    <property type="term" value="P:DNA replication"/>
    <property type="evidence" value="ECO:0007669"/>
    <property type="project" value="UniProtKB-UniRule"/>
</dbReference>
<dbReference type="Gene3D" id="6.10.250.2410">
    <property type="match status" value="1"/>
</dbReference>
<dbReference type="HAMAP" id="MF_01805">
    <property type="entry name" value="ScpA"/>
    <property type="match status" value="1"/>
</dbReference>
<dbReference type="InterPro" id="IPR003768">
    <property type="entry name" value="ScpA"/>
</dbReference>
<dbReference type="NCBIfam" id="NF000993">
    <property type="entry name" value="PRK00104.1-2"/>
    <property type="match status" value="1"/>
</dbReference>
<dbReference type="PANTHER" id="PTHR33969">
    <property type="entry name" value="SEGREGATION AND CONDENSATION PROTEIN A"/>
    <property type="match status" value="1"/>
</dbReference>
<dbReference type="PANTHER" id="PTHR33969:SF2">
    <property type="entry name" value="SEGREGATION AND CONDENSATION PROTEIN A"/>
    <property type="match status" value="1"/>
</dbReference>
<dbReference type="Pfam" id="PF02616">
    <property type="entry name" value="SMC_ScpA"/>
    <property type="match status" value="1"/>
</dbReference>
<comment type="function">
    <text evidence="1">Participates in chromosomal partition during cell division. May act via the formation of a condensin-like complex containing Smc and ScpB that pull DNA away from mid-cell into both cell halves.</text>
</comment>
<comment type="subunit">
    <text evidence="1">Component of a cohesin-like complex composed of ScpA, ScpB and the Smc homodimer, in which ScpA and ScpB bind to the head domain of Smc. The presence of the three proteins is required for the association of the complex with DNA.</text>
</comment>
<comment type="subcellular location">
    <subcellularLocation>
        <location evidence="1">Cytoplasm</location>
    </subcellularLocation>
    <text evidence="1">Associated with two foci at the outer edges of the nucleoid region in young cells, and at four foci within both cell halves in older cells.</text>
</comment>
<comment type="similarity">
    <text evidence="1">Belongs to the ScpA family.</text>
</comment>
<accession>Q03MF6</accession>
<organism>
    <name type="scientific">Streptococcus thermophilus (strain ATCC BAA-491 / LMD-9)</name>
    <dbReference type="NCBI Taxonomy" id="322159"/>
    <lineage>
        <taxon>Bacteria</taxon>
        <taxon>Bacillati</taxon>
        <taxon>Bacillota</taxon>
        <taxon>Bacilli</taxon>
        <taxon>Lactobacillales</taxon>
        <taxon>Streptococcaceae</taxon>
        <taxon>Streptococcus</taxon>
    </lineage>
</organism>
<proteinExistence type="inferred from homology"/>
<keyword id="KW-0131">Cell cycle</keyword>
<keyword id="KW-0132">Cell division</keyword>
<keyword id="KW-0159">Chromosome partition</keyword>
<keyword id="KW-0963">Cytoplasm</keyword>
<protein>
    <recommendedName>
        <fullName evidence="1">Segregation and condensation protein A</fullName>
    </recommendedName>
</protein>
<reference key="1">
    <citation type="journal article" date="2006" name="Proc. Natl. Acad. Sci. U.S.A.">
        <title>Comparative genomics of the lactic acid bacteria.</title>
        <authorList>
            <person name="Makarova K.S."/>
            <person name="Slesarev A."/>
            <person name="Wolf Y.I."/>
            <person name="Sorokin A."/>
            <person name="Mirkin B."/>
            <person name="Koonin E.V."/>
            <person name="Pavlov A."/>
            <person name="Pavlova N."/>
            <person name="Karamychev V."/>
            <person name="Polouchine N."/>
            <person name="Shakhova V."/>
            <person name="Grigoriev I."/>
            <person name="Lou Y."/>
            <person name="Rohksar D."/>
            <person name="Lucas S."/>
            <person name="Huang K."/>
            <person name="Goodstein D.M."/>
            <person name="Hawkins T."/>
            <person name="Plengvidhya V."/>
            <person name="Welker D."/>
            <person name="Hughes J."/>
            <person name="Goh Y."/>
            <person name="Benson A."/>
            <person name="Baldwin K."/>
            <person name="Lee J.-H."/>
            <person name="Diaz-Muniz I."/>
            <person name="Dosti B."/>
            <person name="Smeianov V."/>
            <person name="Wechter W."/>
            <person name="Barabote R."/>
            <person name="Lorca G."/>
            <person name="Altermann E."/>
            <person name="Barrangou R."/>
            <person name="Ganesan B."/>
            <person name="Xie Y."/>
            <person name="Rawsthorne H."/>
            <person name="Tamir D."/>
            <person name="Parker C."/>
            <person name="Breidt F."/>
            <person name="Broadbent J.R."/>
            <person name="Hutkins R."/>
            <person name="O'Sullivan D."/>
            <person name="Steele J."/>
            <person name="Unlu G."/>
            <person name="Saier M.H. Jr."/>
            <person name="Klaenhammer T."/>
            <person name="Richardson P."/>
            <person name="Kozyavkin S."/>
            <person name="Weimer B.C."/>
            <person name="Mills D.A."/>
        </authorList>
    </citation>
    <scope>NUCLEOTIDE SEQUENCE [LARGE SCALE GENOMIC DNA]</scope>
    <source>
        <strain>ATCC BAA-491 / LMD-9</strain>
    </source>
</reference>
<gene>
    <name evidence="1" type="primary">scpA</name>
    <name type="ordered locus">STER_0307</name>
</gene>
<feature type="chain" id="PRO_1000069991" description="Segregation and condensation protein A">
    <location>
        <begin position="1"/>
        <end position="237"/>
    </location>
</feature>
<name>SCPA_STRTD</name>
<evidence type="ECO:0000255" key="1">
    <source>
        <dbReference type="HAMAP-Rule" id="MF_01805"/>
    </source>
</evidence>
<sequence>MDIKLKDFEGPLDLLLHLVSKYEVDIYDVPIVEVIEQYLAYLATLQAMKLEVAGEYMLMASQLMLIKSRKLLPTVVEDEPEVDDPELELLSQLEEYAHFKAASQVLAKKHEVRAQYFSKPKVELVYEDVTLNQDKTIQDIFLAFSKIMAEKQEEIRRRHTTIARDDYKIEDMMLIIEEAFSAKNKLFLDELFSDAKDMNQVITLFLATLELIKIHRISVQQETIFGTITLRKEWTNE</sequence>